<reference key="1">
    <citation type="submission" date="2006-01" db="EMBL/GenBank/DDBJ databases">
        <title>Complete sequence of Novosphingobium aromaticivorans DSM 12444.</title>
        <authorList>
            <consortium name="US DOE Joint Genome Institute"/>
            <person name="Copeland A."/>
            <person name="Lucas S."/>
            <person name="Lapidus A."/>
            <person name="Barry K."/>
            <person name="Detter J.C."/>
            <person name="Glavina T."/>
            <person name="Hammon N."/>
            <person name="Israni S."/>
            <person name="Pitluck S."/>
            <person name="Chain P."/>
            <person name="Malfatti S."/>
            <person name="Shin M."/>
            <person name="Vergez L."/>
            <person name="Schmutz J."/>
            <person name="Larimer F."/>
            <person name="Land M."/>
            <person name="Kyrpides N."/>
            <person name="Ivanova N."/>
            <person name="Fredrickson J."/>
            <person name="Balkwill D."/>
            <person name="Romine M.F."/>
            <person name="Richardson P."/>
        </authorList>
    </citation>
    <scope>NUCLEOTIDE SEQUENCE [LARGE SCALE GENOMIC DNA]</scope>
    <source>
        <strain>ATCC 700278 / DSM 12444 / CCUG 56034 / CIP 105152 / NBRC 16084 / F199</strain>
    </source>
</reference>
<keyword id="KW-1185">Reference proteome</keyword>
<keyword id="KW-0678">Repressor</keyword>
<keyword id="KW-0346">Stress response</keyword>
<keyword id="KW-0804">Transcription</keyword>
<keyword id="KW-0805">Transcription regulation</keyword>
<gene>
    <name evidence="1" type="primary">hrcA</name>
    <name type="ordered locus">Saro_2060</name>
</gene>
<name>HRCA_NOVAD</name>
<dbReference type="EMBL" id="CP000248">
    <property type="protein sequence ID" value="ABD26499.1"/>
    <property type="molecule type" value="Genomic_DNA"/>
</dbReference>
<dbReference type="RefSeq" id="WP_011445708.1">
    <property type="nucleotide sequence ID" value="NC_007794.1"/>
</dbReference>
<dbReference type="SMR" id="Q2G6M4"/>
<dbReference type="STRING" id="279238.Saro_2060"/>
<dbReference type="KEGG" id="nar:Saro_2060"/>
<dbReference type="eggNOG" id="COG1420">
    <property type="taxonomic scope" value="Bacteria"/>
</dbReference>
<dbReference type="HOGENOM" id="CLU_050019_0_0_5"/>
<dbReference type="Proteomes" id="UP000009134">
    <property type="component" value="Chromosome"/>
</dbReference>
<dbReference type="GO" id="GO:0003677">
    <property type="term" value="F:DNA binding"/>
    <property type="evidence" value="ECO:0007669"/>
    <property type="project" value="InterPro"/>
</dbReference>
<dbReference type="GO" id="GO:0045892">
    <property type="term" value="P:negative regulation of DNA-templated transcription"/>
    <property type="evidence" value="ECO:0007669"/>
    <property type="project" value="UniProtKB-UniRule"/>
</dbReference>
<dbReference type="Gene3D" id="3.30.450.40">
    <property type="match status" value="1"/>
</dbReference>
<dbReference type="Gene3D" id="3.30.390.60">
    <property type="entry name" value="Heat-inducible transcription repressor hrca homolog, domain 3"/>
    <property type="match status" value="1"/>
</dbReference>
<dbReference type="Gene3D" id="1.10.10.10">
    <property type="entry name" value="Winged helix-like DNA-binding domain superfamily/Winged helix DNA-binding domain"/>
    <property type="match status" value="1"/>
</dbReference>
<dbReference type="HAMAP" id="MF_00081">
    <property type="entry name" value="HrcA"/>
    <property type="match status" value="1"/>
</dbReference>
<dbReference type="InterPro" id="IPR029016">
    <property type="entry name" value="GAF-like_dom_sf"/>
</dbReference>
<dbReference type="InterPro" id="IPR002571">
    <property type="entry name" value="HrcA"/>
</dbReference>
<dbReference type="InterPro" id="IPR021153">
    <property type="entry name" value="HrcA_C"/>
</dbReference>
<dbReference type="InterPro" id="IPR036388">
    <property type="entry name" value="WH-like_DNA-bd_sf"/>
</dbReference>
<dbReference type="InterPro" id="IPR036390">
    <property type="entry name" value="WH_DNA-bd_sf"/>
</dbReference>
<dbReference type="InterPro" id="IPR023120">
    <property type="entry name" value="WHTH_transcript_rep_HrcA_IDD"/>
</dbReference>
<dbReference type="NCBIfam" id="TIGR00331">
    <property type="entry name" value="hrcA"/>
    <property type="match status" value="1"/>
</dbReference>
<dbReference type="PANTHER" id="PTHR34824">
    <property type="entry name" value="HEAT-INDUCIBLE TRANSCRIPTION REPRESSOR HRCA"/>
    <property type="match status" value="1"/>
</dbReference>
<dbReference type="PANTHER" id="PTHR34824:SF1">
    <property type="entry name" value="HEAT-INDUCIBLE TRANSCRIPTION REPRESSOR HRCA"/>
    <property type="match status" value="1"/>
</dbReference>
<dbReference type="Pfam" id="PF01628">
    <property type="entry name" value="HrcA"/>
    <property type="match status" value="1"/>
</dbReference>
<dbReference type="PIRSF" id="PIRSF005485">
    <property type="entry name" value="HrcA"/>
    <property type="match status" value="1"/>
</dbReference>
<dbReference type="SUPFAM" id="SSF55781">
    <property type="entry name" value="GAF domain-like"/>
    <property type="match status" value="1"/>
</dbReference>
<dbReference type="SUPFAM" id="SSF46785">
    <property type="entry name" value="Winged helix' DNA-binding domain"/>
    <property type="match status" value="1"/>
</dbReference>
<sequence>MTAPTLTDLTDRAREIFRLVVEGYIASGHPVGSKALAGHGSVNLSPASIRSVLQELQDAGLLAAPHTSAGRMPTEFGLRLFVDGIMQVAEPSAAERAQIERGLVAGGTIESALAAASTALSELSAGAAVVMVPKREPRLVQISFVPLSPLRALAVLVSEDGGIENRVIDLPEPVGPSALEQAGNYLTSRLHGRTLGEAAGVVRAEIAGGRSALDEASADLVQRGLVVWTQDATARPVMVVRGQANLLDETALQDIERVRQLLEELEGAEAIARVLDAAREAQATRIFIGSENRLFSLSGSSVIASPWRDGDGRVVGVVGVIGPTRLNYARVVPMVDFTAQTLGKFIGQDGFSRK</sequence>
<comment type="function">
    <text evidence="1">Negative regulator of class I heat shock genes (grpE-dnaK-dnaJ and groELS operons). Prevents heat-shock induction of these operons.</text>
</comment>
<comment type="similarity">
    <text evidence="1">Belongs to the HrcA family.</text>
</comment>
<feature type="chain" id="PRO_1000010439" description="Heat-inducible transcription repressor HrcA">
    <location>
        <begin position="1"/>
        <end position="354"/>
    </location>
</feature>
<organism>
    <name type="scientific">Novosphingobium aromaticivorans (strain ATCC 700278 / DSM 12444 / CCUG 56034 / CIP 105152 / NBRC 16084 / F199)</name>
    <dbReference type="NCBI Taxonomy" id="279238"/>
    <lineage>
        <taxon>Bacteria</taxon>
        <taxon>Pseudomonadati</taxon>
        <taxon>Pseudomonadota</taxon>
        <taxon>Alphaproteobacteria</taxon>
        <taxon>Sphingomonadales</taxon>
        <taxon>Sphingomonadaceae</taxon>
        <taxon>Novosphingobium</taxon>
    </lineage>
</organism>
<accession>Q2G6M4</accession>
<protein>
    <recommendedName>
        <fullName evidence="1">Heat-inducible transcription repressor HrcA</fullName>
    </recommendedName>
</protein>
<proteinExistence type="inferred from homology"/>
<evidence type="ECO:0000255" key="1">
    <source>
        <dbReference type="HAMAP-Rule" id="MF_00081"/>
    </source>
</evidence>